<proteinExistence type="inferred from homology"/>
<feature type="chain" id="PRO_1000124032" description="4-hydroxy-tetrahydrodipicolinate synthase">
    <location>
        <begin position="1"/>
        <end position="292"/>
    </location>
</feature>
<feature type="active site" description="Proton donor/acceptor" evidence="1">
    <location>
        <position position="133"/>
    </location>
</feature>
<feature type="active site" description="Schiff-base intermediate with substrate" evidence="1">
    <location>
        <position position="161"/>
    </location>
</feature>
<feature type="binding site" evidence="1">
    <location>
        <position position="45"/>
    </location>
    <ligand>
        <name>pyruvate</name>
        <dbReference type="ChEBI" id="CHEBI:15361"/>
    </ligand>
</feature>
<feature type="binding site" evidence="1">
    <location>
        <position position="203"/>
    </location>
    <ligand>
        <name>pyruvate</name>
        <dbReference type="ChEBI" id="CHEBI:15361"/>
    </ligand>
</feature>
<feature type="site" description="Part of a proton relay during catalysis" evidence="1">
    <location>
        <position position="44"/>
    </location>
</feature>
<feature type="site" description="Part of a proton relay during catalysis" evidence="1">
    <location>
        <position position="107"/>
    </location>
</feature>
<accession>B1LNC8</accession>
<sequence length="292" mass="31284">MFTGSIVAIVTPMDEKGNVCRASLKKLIDYHVASGTSAIVSVGTTGESATLNHDEHADVVMMTLELADGRIPVIAGTGANATAEAISLTQRFNDSGIVGCLTVTPYYNRPSQEGLYQHFKAIAEHTDLPQILYNVPSRTGCDLLPETVGRLAKVKNIIGIKEATGNLTRVNQIKELVSDDFVLLSGDDASALDFMQLGGHGVISVTANVAARDMAQMCKLAAEGHFAEARVINQRLMPLHNKLFVEPNPIPVKWACKELGLVATDTLRLPMTPITDSGRETVRAALKHAGLL</sequence>
<dbReference type="EC" id="4.3.3.7" evidence="1"/>
<dbReference type="EMBL" id="CP000970">
    <property type="protein sequence ID" value="ACB17954.1"/>
    <property type="molecule type" value="Genomic_DNA"/>
</dbReference>
<dbReference type="RefSeq" id="WP_001295469.1">
    <property type="nucleotide sequence ID" value="NC_010498.1"/>
</dbReference>
<dbReference type="SMR" id="B1LNC8"/>
<dbReference type="GeneID" id="93774660"/>
<dbReference type="KEGG" id="ecm:EcSMS35_2625"/>
<dbReference type="HOGENOM" id="CLU_049343_7_1_6"/>
<dbReference type="UniPathway" id="UPA00034">
    <property type="reaction ID" value="UER00017"/>
</dbReference>
<dbReference type="Proteomes" id="UP000007011">
    <property type="component" value="Chromosome"/>
</dbReference>
<dbReference type="GO" id="GO:0005829">
    <property type="term" value="C:cytosol"/>
    <property type="evidence" value="ECO:0007669"/>
    <property type="project" value="TreeGrafter"/>
</dbReference>
<dbReference type="GO" id="GO:0008840">
    <property type="term" value="F:4-hydroxy-tetrahydrodipicolinate synthase activity"/>
    <property type="evidence" value="ECO:0007669"/>
    <property type="project" value="UniProtKB-UniRule"/>
</dbReference>
<dbReference type="GO" id="GO:0019877">
    <property type="term" value="P:diaminopimelate biosynthetic process"/>
    <property type="evidence" value="ECO:0007669"/>
    <property type="project" value="UniProtKB-UniRule"/>
</dbReference>
<dbReference type="GO" id="GO:0009089">
    <property type="term" value="P:lysine biosynthetic process via diaminopimelate"/>
    <property type="evidence" value="ECO:0007669"/>
    <property type="project" value="UniProtKB-UniRule"/>
</dbReference>
<dbReference type="CDD" id="cd00950">
    <property type="entry name" value="DHDPS"/>
    <property type="match status" value="1"/>
</dbReference>
<dbReference type="FunFam" id="3.20.20.70:FF:000046">
    <property type="entry name" value="4-hydroxy-tetrahydrodipicolinate synthase"/>
    <property type="match status" value="1"/>
</dbReference>
<dbReference type="Gene3D" id="3.20.20.70">
    <property type="entry name" value="Aldolase class I"/>
    <property type="match status" value="1"/>
</dbReference>
<dbReference type="HAMAP" id="MF_00418">
    <property type="entry name" value="DapA"/>
    <property type="match status" value="1"/>
</dbReference>
<dbReference type="InterPro" id="IPR013785">
    <property type="entry name" value="Aldolase_TIM"/>
</dbReference>
<dbReference type="InterPro" id="IPR005263">
    <property type="entry name" value="DapA"/>
</dbReference>
<dbReference type="InterPro" id="IPR002220">
    <property type="entry name" value="DapA-like"/>
</dbReference>
<dbReference type="InterPro" id="IPR020625">
    <property type="entry name" value="Schiff_base-form_aldolases_AS"/>
</dbReference>
<dbReference type="InterPro" id="IPR020624">
    <property type="entry name" value="Schiff_base-form_aldolases_CS"/>
</dbReference>
<dbReference type="NCBIfam" id="TIGR00674">
    <property type="entry name" value="dapA"/>
    <property type="match status" value="1"/>
</dbReference>
<dbReference type="PANTHER" id="PTHR12128:SF66">
    <property type="entry name" value="4-HYDROXY-2-OXOGLUTARATE ALDOLASE, MITOCHONDRIAL"/>
    <property type="match status" value="1"/>
</dbReference>
<dbReference type="PANTHER" id="PTHR12128">
    <property type="entry name" value="DIHYDRODIPICOLINATE SYNTHASE"/>
    <property type="match status" value="1"/>
</dbReference>
<dbReference type="Pfam" id="PF00701">
    <property type="entry name" value="DHDPS"/>
    <property type="match status" value="1"/>
</dbReference>
<dbReference type="PIRSF" id="PIRSF001365">
    <property type="entry name" value="DHDPS"/>
    <property type="match status" value="1"/>
</dbReference>
<dbReference type="PRINTS" id="PR00146">
    <property type="entry name" value="DHPICSNTHASE"/>
</dbReference>
<dbReference type="SMART" id="SM01130">
    <property type="entry name" value="DHDPS"/>
    <property type="match status" value="1"/>
</dbReference>
<dbReference type="SUPFAM" id="SSF51569">
    <property type="entry name" value="Aldolase"/>
    <property type="match status" value="1"/>
</dbReference>
<dbReference type="PROSITE" id="PS00665">
    <property type="entry name" value="DHDPS_1"/>
    <property type="match status" value="1"/>
</dbReference>
<dbReference type="PROSITE" id="PS00666">
    <property type="entry name" value="DHDPS_2"/>
    <property type="match status" value="1"/>
</dbReference>
<evidence type="ECO:0000255" key="1">
    <source>
        <dbReference type="HAMAP-Rule" id="MF_00418"/>
    </source>
</evidence>
<evidence type="ECO:0000305" key="2"/>
<name>DAPA_ECOSM</name>
<reference key="1">
    <citation type="journal article" date="2008" name="J. Bacteriol.">
        <title>Insights into the environmental resistance gene pool from the genome sequence of the multidrug-resistant environmental isolate Escherichia coli SMS-3-5.</title>
        <authorList>
            <person name="Fricke W.F."/>
            <person name="Wright M.S."/>
            <person name="Lindell A.H."/>
            <person name="Harkins D.M."/>
            <person name="Baker-Austin C."/>
            <person name="Ravel J."/>
            <person name="Stepanauskas R."/>
        </authorList>
    </citation>
    <scope>NUCLEOTIDE SEQUENCE [LARGE SCALE GENOMIC DNA]</scope>
    <source>
        <strain>SMS-3-5 / SECEC</strain>
    </source>
</reference>
<gene>
    <name evidence="1" type="primary">dapA</name>
    <name type="ordered locus">EcSMS35_2625</name>
</gene>
<comment type="function">
    <text evidence="1">Catalyzes the condensation of (S)-aspartate-beta-semialdehyde [(S)-ASA] and pyruvate to 4-hydroxy-tetrahydrodipicolinate (HTPA).</text>
</comment>
<comment type="catalytic activity">
    <reaction evidence="1">
        <text>L-aspartate 4-semialdehyde + pyruvate = (2S,4S)-4-hydroxy-2,3,4,5-tetrahydrodipicolinate + H2O + H(+)</text>
        <dbReference type="Rhea" id="RHEA:34171"/>
        <dbReference type="ChEBI" id="CHEBI:15361"/>
        <dbReference type="ChEBI" id="CHEBI:15377"/>
        <dbReference type="ChEBI" id="CHEBI:15378"/>
        <dbReference type="ChEBI" id="CHEBI:67139"/>
        <dbReference type="ChEBI" id="CHEBI:537519"/>
        <dbReference type="EC" id="4.3.3.7"/>
    </reaction>
</comment>
<comment type="pathway">
    <text evidence="1">Amino-acid biosynthesis; L-lysine biosynthesis via DAP pathway; (S)-tetrahydrodipicolinate from L-aspartate: step 3/4.</text>
</comment>
<comment type="subunit">
    <text evidence="1">Homotetramer; dimer of dimers.</text>
</comment>
<comment type="subcellular location">
    <subcellularLocation>
        <location evidence="1">Cytoplasm</location>
    </subcellularLocation>
</comment>
<comment type="similarity">
    <text evidence="1">Belongs to the DapA family.</text>
</comment>
<comment type="caution">
    <text evidence="2">Was originally thought to be a dihydrodipicolinate synthase (DHDPS), catalyzing the condensation of (S)-aspartate-beta-semialdehyde [(S)-ASA] and pyruvate to dihydrodipicolinate (DHDP). However, it was shown in E.coli that the product of the enzymatic reaction is not dihydrodipicolinate but in fact (4S)-4-hydroxy-2,3,4,5-tetrahydro-(2S)-dipicolinic acid (HTPA), and that the consecutive dehydration reaction leading to DHDP is not spontaneous but catalyzed by DapB.</text>
</comment>
<keyword id="KW-0028">Amino-acid biosynthesis</keyword>
<keyword id="KW-0963">Cytoplasm</keyword>
<keyword id="KW-0220">Diaminopimelate biosynthesis</keyword>
<keyword id="KW-0456">Lyase</keyword>
<keyword id="KW-0457">Lysine biosynthesis</keyword>
<keyword id="KW-0704">Schiff base</keyword>
<organism>
    <name type="scientific">Escherichia coli (strain SMS-3-5 / SECEC)</name>
    <dbReference type="NCBI Taxonomy" id="439855"/>
    <lineage>
        <taxon>Bacteria</taxon>
        <taxon>Pseudomonadati</taxon>
        <taxon>Pseudomonadota</taxon>
        <taxon>Gammaproteobacteria</taxon>
        <taxon>Enterobacterales</taxon>
        <taxon>Enterobacteriaceae</taxon>
        <taxon>Escherichia</taxon>
    </lineage>
</organism>
<protein>
    <recommendedName>
        <fullName evidence="1">4-hydroxy-tetrahydrodipicolinate synthase</fullName>
        <shortName evidence="1">HTPA synthase</shortName>
        <ecNumber evidence="1">4.3.3.7</ecNumber>
    </recommendedName>
</protein>